<sequence length="357" mass="38536">MAEFKFTDLVEPVAVDKKTALRITVLGGGSFGTAMANLAARNGCDTMIWIRDAETAEEINKTHINKRYLPDFTLESSLRAVSDLEQAVCDRDIILVAIPSHSFRDVLKQIAPYITAQAVVSLTKGVEAKTFSFMSDIIREELPEVPYGVLSGPNLAKEIMAGMPSGTVIASDSELVRYAVQHALHSALFRVFGSDDVHGVELGGALKNIYAVAMGIGAAYKIGENTKSMILTRALAEMSRFAVKQGANPLTFLGLSGVGDLFATCNSPLSRNYQIGYALGSGKTLEQASKELGQTAEGINTIVQVRGKAQELDVYMPITNALYEVIFEGAPPLNIALSLMKNGHRSDVEFVLPHHEV</sequence>
<dbReference type="EC" id="1.1.1.94" evidence="1"/>
<dbReference type="EMBL" id="CU459141">
    <property type="protein sequence ID" value="CAM86145.1"/>
    <property type="molecule type" value="Genomic_DNA"/>
</dbReference>
<dbReference type="RefSeq" id="WP_000807316.1">
    <property type="nucleotide sequence ID" value="NZ_JBDGFB010000016.1"/>
</dbReference>
<dbReference type="SMR" id="B0V862"/>
<dbReference type="EnsemblBacteria" id="CAM86145">
    <property type="protein sequence ID" value="CAM86145"/>
    <property type="gene ID" value="ABAYE1223"/>
</dbReference>
<dbReference type="KEGG" id="aby:ABAYE1223"/>
<dbReference type="HOGENOM" id="CLU_033449_0_2_6"/>
<dbReference type="UniPathway" id="UPA00940"/>
<dbReference type="GO" id="GO:0005829">
    <property type="term" value="C:cytosol"/>
    <property type="evidence" value="ECO:0007669"/>
    <property type="project" value="TreeGrafter"/>
</dbReference>
<dbReference type="GO" id="GO:0047952">
    <property type="term" value="F:glycerol-3-phosphate dehydrogenase [NAD(P)+] activity"/>
    <property type="evidence" value="ECO:0007669"/>
    <property type="project" value="UniProtKB-UniRule"/>
</dbReference>
<dbReference type="GO" id="GO:0051287">
    <property type="term" value="F:NAD binding"/>
    <property type="evidence" value="ECO:0007669"/>
    <property type="project" value="InterPro"/>
</dbReference>
<dbReference type="GO" id="GO:0005975">
    <property type="term" value="P:carbohydrate metabolic process"/>
    <property type="evidence" value="ECO:0007669"/>
    <property type="project" value="InterPro"/>
</dbReference>
<dbReference type="GO" id="GO:0046167">
    <property type="term" value="P:glycerol-3-phosphate biosynthetic process"/>
    <property type="evidence" value="ECO:0007669"/>
    <property type="project" value="UniProtKB-UniRule"/>
</dbReference>
<dbReference type="GO" id="GO:0046168">
    <property type="term" value="P:glycerol-3-phosphate catabolic process"/>
    <property type="evidence" value="ECO:0007669"/>
    <property type="project" value="InterPro"/>
</dbReference>
<dbReference type="GO" id="GO:0046474">
    <property type="term" value="P:glycerophospholipid biosynthetic process"/>
    <property type="evidence" value="ECO:0007669"/>
    <property type="project" value="TreeGrafter"/>
</dbReference>
<dbReference type="FunFam" id="1.10.1040.10:FF:000001">
    <property type="entry name" value="Glycerol-3-phosphate dehydrogenase [NAD(P)+]"/>
    <property type="match status" value="1"/>
</dbReference>
<dbReference type="FunFam" id="3.40.50.720:FF:000019">
    <property type="entry name" value="Glycerol-3-phosphate dehydrogenase [NAD(P)+]"/>
    <property type="match status" value="1"/>
</dbReference>
<dbReference type="Gene3D" id="1.10.1040.10">
    <property type="entry name" value="N-(1-d-carboxylethyl)-l-norvaline Dehydrogenase, domain 2"/>
    <property type="match status" value="1"/>
</dbReference>
<dbReference type="Gene3D" id="3.40.50.720">
    <property type="entry name" value="NAD(P)-binding Rossmann-like Domain"/>
    <property type="match status" value="1"/>
</dbReference>
<dbReference type="HAMAP" id="MF_00394">
    <property type="entry name" value="NAD_Glyc3P_dehydrog"/>
    <property type="match status" value="1"/>
</dbReference>
<dbReference type="InterPro" id="IPR008927">
    <property type="entry name" value="6-PGluconate_DH-like_C_sf"/>
</dbReference>
<dbReference type="InterPro" id="IPR013328">
    <property type="entry name" value="6PGD_dom2"/>
</dbReference>
<dbReference type="InterPro" id="IPR006168">
    <property type="entry name" value="G3P_DH_NAD-dep"/>
</dbReference>
<dbReference type="InterPro" id="IPR006109">
    <property type="entry name" value="G3P_DH_NAD-dep_C"/>
</dbReference>
<dbReference type="InterPro" id="IPR011128">
    <property type="entry name" value="G3P_DH_NAD-dep_N"/>
</dbReference>
<dbReference type="InterPro" id="IPR036291">
    <property type="entry name" value="NAD(P)-bd_dom_sf"/>
</dbReference>
<dbReference type="NCBIfam" id="NF000940">
    <property type="entry name" value="PRK00094.1-2"/>
    <property type="match status" value="1"/>
</dbReference>
<dbReference type="NCBIfam" id="NF000942">
    <property type="entry name" value="PRK00094.1-4"/>
    <property type="match status" value="1"/>
</dbReference>
<dbReference type="NCBIfam" id="NF000944">
    <property type="entry name" value="PRK00094.2-2"/>
    <property type="match status" value="1"/>
</dbReference>
<dbReference type="NCBIfam" id="NF000946">
    <property type="entry name" value="PRK00094.2-4"/>
    <property type="match status" value="1"/>
</dbReference>
<dbReference type="PANTHER" id="PTHR11728">
    <property type="entry name" value="GLYCEROL-3-PHOSPHATE DEHYDROGENASE"/>
    <property type="match status" value="1"/>
</dbReference>
<dbReference type="PANTHER" id="PTHR11728:SF1">
    <property type="entry name" value="GLYCEROL-3-PHOSPHATE DEHYDROGENASE [NAD(+)] 2, CHLOROPLASTIC"/>
    <property type="match status" value="1"/>
</dbReference>
<dbReference type="Pfam" id="PF07479">
    <property type="entry name" value="NAD_Gly3P_dh_C"/>
    <property type="match status" value="1"/>
</dbReference>
<dbReference type="Pfam" id="PF01210">
    <property type="entry name" value="NAD_Gly3P_dh_N"/>
    <property type="match status" value="1"/>
</dbReference>
<dbReference type="PIRSF" id="PIRSF000114">
    <property type="entry name" value="Glycerol-3-P_dh"/>
    <property type="match status" value="1"/>
</dbReference>
<dbReference type="PRINTS" id="PR00077">
    <property type="entry name" value="GPDHDRGNASE"/>
</dbReference>
<dbReference type="SUPFAM" id="SSF48179">
    <property type="entry name" value="6-phosphogluconate dehydrogenase C-terminal domain-like"/>
    <property type="match status" value="1"/>
</dbReference>
<dbReference type="SUPFAM" id="SSF51735">
    <property type="entry name" value="NAD(P)-binding Rossmann-fold domains"/>
    <property type="match status" value="1"/>
</dbReference>
<dbReference type="PROSITE" id="PS00957">
    <property type="entry name" value="NAD_G3PDH"/>
    <property type="match status" value="1"/>
</dbReference>
<accession>B0V862</accession>
<proteinExistence type="inferred from homology"/>
<name>GPDA_ACIBY</name>
<gene>
    <name evidence="1" type="primary">gpsA</name>
    <name type="ordered locus">ABAYE1223</name>
</gene>
<organism>
    <name type="scientific">Acinetobacter baumannii (strain AYE)</name>
    <dbReference type="NCBI Taxonomy" id="509173"/>
    <lineage>
        <taxon>Bacteria</taxon>
        <taxon>Pseudomonadati</taxon>
        <taxon>Pseudomonadota</taxon>
        <taxon>Gammaproteobacteria</taxon>
        <taxon>Moraxellales</taxon>
        <taxon>Moraxellaceae</taxon>
        <taxon>Acinetobacter</taxon>
        <taxon>Acinetobacter calcoaceticus/baumannii complex</taxon>
    </lineage>
</organism>
<feature type="chain" id="PRO_1000123110" description="Glycerol-3-phosphate dehydrogenase [NAD(P)+]">
    <location>
        <begin position="1"/>
        <end position="357"/>
    </location>
</feature>
<feature type="active site" description="Proton acceptor" evidence="1">
    <location>
        <position position="207"/>
    </location>
</feature>
<feature type="binding site" evidence="1">
    <location>
        <position position="30"/>
    </location>
    <ligand>
        <name>NADPH</name>
        <dbReference type="ChEBI" id="CHEBI:57783"/>
    </ligand>
</feature>
<feature type="binding site" evidence="1">
    <location>
        <position position="31"/>
    </location>
    <ligand>
        <name>NADPH</name>
        <dbReference type="ChEBI" id="CHEBI:57783"/>
    </ligand>
</feature>
<feature type="binding site" evidence="1">
    <location>
        <position position="51"/>
    </location>
    <ligand>
        <name>NADPH</name>
        <dbReference type="ChEBI" id="CHEBI:57783"/>
    </ligand>
</feature>
<feature type="binding site" evidence="1">
    <location>
        <position position="124"/>
    </location>
    <ligand>
        <name>NADPH</name>
        <dbReference type="ChEBI" id="CHEBI:57783"/>
    </ligand>
</feature>
<feature type="binding site" evidence="1">
    <location>
        <position position="124"/>
    </location>
    <ligand>
        <name>sn-glycerol 3-phosphate</name>
        <dbReference type="ChEBI" id="CHEBI:57597"/>
    </ligand>
</feature>
<feature type="binding site" evidence="1">
    <location>
        <position position="152"/>
    </location>
    <ligand>
        <name>sn-glycerol 3-phosphate</name>
        <dbReference type="ChEBI" id="CHEBI:57597"/>
    </ligand>
</feature>
<feature type="binding site" evidence="1">
    <location>
        <position position="156"/>
    </location>
    <ligand>
        <name>NADPH</name>
        <dbReference type="ChEBI" id="CHEBI:57783"/>
    </ligand>
</feature>
<feature type="binding site" evidence="1">
    <location>
        <position position="207"/>
    </location>
    <ligand>
        <name>sn-glycerol 3-phosphate</name>
        <dbReference type="ChEBI" id="CHEBI:57597"/>
    </ligand>
</feature>
<feature type="binding site" evidence="1">
    <location>
        <position position="260"/>
    </location>
    <ligand>
        <name>sn-glycerol 3-phosphate</name>
        <dbReference type="ChEBI" id="CHEBI:57597"/>
    </ligand>
</feature>
<feature type="binding site" evidence="1">
    <location>
        <position position="270"/>
    </location>
    <ligand>
        <name>sn-glycerol 3-phosphate</name>
        <dbReference type="ChEBI" id="CHEBI:57597"/>
    </ligand>
</feature>
<feature type="binding site" evidence="1">
    <location>
        <position position="271"/>
    </location>
    <ligand>
        <name>NADPH</name>
        <dbReference type="ChEBI" id="CHEBI:57783"/>
    </ligand>
</feature>
<feature type="binding site" evidence="1">
    <location>
        <position position="271"/>
    </location>
    <ligand>
        <name>sn-glycerol 3-phosphate</name>
        <dbReference type="ChEBI" id="CHEBI:57597"/>
    </ligand>
</feature>
<feature type="binding site" evidence="1">
    <location>
        <position position="272"/>
    </location>
    <ligand>
        <name>sn-glycerol 3-phosphate</name>
        <dbReference type="ChEBI" id="CHEBI:57597"/>
    </ligand>
</feature>
<feature type="binding site" evidence="1">
    <location>
        <position position="297"/>
    </location>
    <ligand>
        <name>NADPH</name>
        <dbReference type="ChEBI" id="CHEBI:57783"/>
    </ligand>
</feature>
<reference key="1">
    <citation type="journal article" date="2008" name="PLoS ONE">
        <title>Comparative analysis of Acinetobacters: three genomes for three lifestyles.</title>
        <authorList>
            <person name="Vallenet D."/>
            <person name="Nordmann P."/>
            <person name="Barbe V."/>
            <person name="Poirel L."/>
            <person name="Mangenot S."/>
            <person name="Bataille E."/>
            <person name="Dossat C."/>
            <person name="Gas S."/>
            <person name="Kreimeyer A."/>
            <person name="Lenoble P."/>
            <person name="Oztas S."/>
            <person name="Poulain J."/>
            <person name="Segurens B."/>
            <person name="Robert C."/>
            <person name="Abergel C."/>
            <person name="Claverie J.-M."/>
            <person name="Raoult D."/>
            <person name="Medigue C."/>
            <person name="Weissenbach J."/>
            <person name="Cruveiller S."/>
        </authorList>
    </citation>
    <scope>NUCLEOTIDE SEQUENCE [LARGE SCALE GENOMIC DNA]</scope>
    <source>
        <strain>AYE</strain>
    </source>
</reference>
<comment type="function">
    <text evidence="1">Catalyzes the reduction of the glycolytic intermediate dihydroxyacetone phosphate (DHAP) to sn-glycerol 3-phosphate (G3P), the key precursor for phospholipid synthesis.</text>
</comment>
<comment type="catalytic activity">
    <reaction evidence="1">
        <text>sn-glycerol 3-phosphate + NAD(+) = dihydroxyacetone phosphate + NADH + H(+)</text>
        <dbReference type="Rhea" id="RHEA:11092"/>
        <dbReference type="ChEBI" id="CHEBI:15378"/>
        <dbReference type="ChEBI" id="CHEBI:57540"/>
        <dbReference type="ChEBI" id="CHEBI:57597"/>
        <dbReference type="ChEBI" id="CHEBI:57642"/>
        <dbReference type="ChEBI" id="CHEBI:57945"/>
        <dbReference type="EC" id="1.1.1.94"/>
    </reaction>
    <physiologicalReaction direction="right-to-left" evidence="1">
        <dbReference type="Rhea" id="RHEA:11094"/>
    </physiologicalReaction>
</comment>
<comment type="catalytic activity">
    <reaction evidence="1">
        <text>sn-glycerol 3-phosphate + NADP(+) = dihydroxyacetone phosphate + NADPH + H(+)</text>
        <dbReference type="Rhea" id="RHEA:11096"/>
        <dbReference type="ChEBI" id="CHEBI:15378"/>
        <dbReference type="ChEBI" id="CHEBI:57597"/>
        <dbReference type="ChEBI" id="CHEBI:57642"/>
        <dbReference type="ChEBI" id="CHEBI:57783"/>
        <dbReference type="ChEBI" id="CHEBI:58349"/>
        <dbReference type="EC" id="1.1.1.94"/>
    </reaction>
    <physiologicalReaction direction="right-to-left" evidence="1">
        <dbReference type="Rhea" id="RHEA:11098"/>
    </physiologicalReaction>
</comment>
<comment type="pathway">
    <text evidence="1">Membrane lipid metabolism; glycerophospholipid metabolism.</text>
</comment>
<comment type="subcellular location">
    <subcellularLocation>
        <location evidence="1">Cytoplasm</location>
    </subcellularLocation>
</comment>
<comment type="similarity">
    <text evidence="1">Belongs to the NAD-dependent glycerol-3-phosphate dehydrogenase family.</text>
</comment>
<keyword id="KW-0963">Cytoplasm</keyword>
<keyword id="KW-0444">Lipid biosynthesis</keyword>
<keyword id="KW-0443">Lipid metabolism</keyword>
<keyword id="KW-0520">NAD</keyword>
<keyword id="KW-0521">NADP</keyword>
<keyword id="KW-0547">Nucleotide-binding</keyword>
<keyword id="KW-0560">Oxidoreductase</keyword>
<keyword id="KW-0594">Phospholipid biosynthesis</keyword>
<keyword id="KW-1208">Phospholipid metabolism</keyword>
<evidence type="ECO:0000255" key="1">
    <source>
        <dbReference type="HAMAP-Rule" id="MF_00394"/>
    </source>
</evidence>
<protein>
    <recommendedName>
        <fullName evidence="1">Glycerol-3-phosphate dehydrogenase [NAD(P)+]</fullName>
        <ecNumber evidence="1">1.1.1.94</ecNumber>
    </recommendedName>
    <alternativeName>
        <fullName evidence="1">NAD(P)(+)-dependent glycerol-3-phosphate dehydrogenase</fullName>
    </alternativeName>
    <alternativeName>
        <fullName evidence="1">NAD(P)H-dependent dihydroxyacetone-phosphate reductase</fullName>
    </alternativeName>
</protein>